<reference key="1">
    <citation type="journal article" date="2004" name="Environ. Microbiol.">
        <title>The genome of Desulfotalea psychrophila, a sulfate-reducing bacterium from permanently cold Arctic sediments.</title>
        <authorList>
            <person name="Rabus R."/>
            <person name="Ruepp A."/>
            <person name="Frickey T."/>
            <person name="Rattei T."/>
            <person name="Fartmann B."/>
            <person name="Stark M."/>
            <person name="Bauer M."/>
            <person name="Zibat A."/>
            <person name="Lombardot T."/>
            <person name="Becker I."/>
            <person name="Amann J."/>
            <person name="Gellner K."/>
            <person name="Teeling H."/>
            <person name="Leuschner W.D."/>
            <person name="Gloeckner F.-O."/>
            <person name="Lupas A.N."/>
            <person name="Amann R."/>
            <person name="Klenk H.-P."/>
        </authorList>
    </citation>
    <scope>NUCLEOTIDE SEQUENCE [LARGE SCALE GENOMIC DNA]</scope>
    <source>
        <strain>DSM 12343 / LSv54</strain>
    </source>
</reference>
<accession>Q6ALS7</accession>
<feature type="chain" id="PRO_0000346334" description="Methylenetetrahydrofolate--tRNA-(uracil-5-)-methyltransferase TrmFO">
    <location>
        <begin position="1"/>
        <end position="444"/>
    </location>
</feature>
<feature type="binding site" evidence="1">
    <location>
        <begin position="11"/>
        <end position="16"/>
    </location>
    <ligand>
        <name>FAD</name>
        <dbReference type="ChEBI" id="CHEBI:57692"/>
    </ligand>
</feature>
<gene>
    <name evidence="1" type="primary">trmFO</name>
    <name type="ordered locus">DP1969</name>
</gene>
<sequence>MNNMNKVIIIGGGLAGSEAAWQAANRGCQVELVDMKPEKYSPAHSSPLLGELVCSNSLRSNDPTSAVGLMKREMRFFNSLIMDVADSTAVPAGKALAVDRDKFAEAITARLESHPNISISHREVTAVPEPADHPTIIATGPLTAEDFAESLAELTGRDRLAFYDAIAPILDSESLNMDIVYCKSRYDDGPGDYLNCPMNREEYERFISELASADYMPLKDFEDAKYFEGCLPVEVICSRGVDTLRFGPMKPVGLPDPRTGQDPYAVVQLRMENAEGSTYNMVGFQTKMTYPEQKRIFRMIPGMENVEFVRLGSIHRNTFICAPELLADTLQIKKRPDLLLAGQLSGVEGYIESAAMGLLAGINAARRAMGEELVSPPAEMALGAMVGHLTKSAAKNFQPSNVNFGLFPAWEKKVPKRFRGEKRAEASALALEVWNEKWQISEQV</sequence>
<comment type="function">
    <text evidence="1">Catalyzes the folate-dependent formation of 5-methyl-uridine at position 54 (M-5-U54) in all tRNAs.</text>
</comment>
<comment type="catalytic activity">
    <reaction evidence="1">
        <text>uridine(54) in tRNA + (6R)-5,10-methylene-5,6,7,8-tetrahydrofolate + NADH + H(+) = 5-methyluridine(54) in tRNA + (6S)-5,6,7,8-tetrahydrofolate + NAD(+)</text>
        <dbReference type="Rhea" id="RHEA:16873"/>
        <dbReference type="Rhea" id="RHEA-COMP:10167"/>
        <dbReference type="Rhea" id="RHEA-COMP:10193"/>
        <dbReference type="ChEBI" id="CHEBI:15378"/>
        <dbReference type="ChEBI" id="CHEBI:15636"/>
        <dbReference type="ChEBI" id="CHEBI:57453"/>
        <dbReference type="ChEBI" id="CHEBI:57540"/>
        <dbReference type="ChEBI" id="CHEBI:57945"/>
        <dbReference type="ChEBI" id="CHEBI:65315"/>
        <dbReference type="ChEBI" id="CHEBI:74447"/>
        <dbReference type="EC" id="2.1.1.74"/>
    </reaction>
</comment>
<comment type="catalytic activity">
    <reaction evidence="1">
        <text>uridine(54) in tRNA + (6R)-5,10-methylene-5,6,7,8-tetrahydrofolate + NADPH + H(+) = 5-methyluridine(54) in tRNA + (6S)-5,6,7,8-tetrahydrofolate + NADP(+)</text>
        <dbReference type="Rhea" id="RHEA:62372"/>
        <dbReference type="Rhea" id="RHEA-COMP:10167"/>
        <dbReference type="Rhea" id="RHEA-COMP:10193"/>
        <dbReference type="ChEBI" id="CHEBI:15378"/>
        <dbReference type="ChEBI" id="CHEBI:15636"/>
        <dbReference type="ChEBI" id="CHEBI:57453"/>
        <dbReference type="ChEBI" id="CHEBI:57783"/>
        <dbReference type="ChEBI" id="CHEBI:58349"/>
        <dbReference type="ChEBI" id="CHEBI:65315"/>
        <dbReference type="ChEBI" id="CHEBI:74447"/>
        <dbReference type="EC" id="2.1.1.74"/>
    </reaction>
</comment>
<comment type="cofactor">
    <cofactor evidence="1">
        <name>FAD</name>
        <dbReference type="ChEBI" id="CHEBI:57692"/>
    </cofactor>
</comment>
<comment type="subcellular location">
    <subcellularLocation>
        <location evidence="1">Cytoplasm</location>
    </subcellularLocation>
</comment>
<comment type="similarity">
    <text evidence="1">Belongs to the MnmG family. TrmFO subfamily.</text>
</comment>
<organism>
    <name type="scientific">Desulfotalea psychrophila (strain LSv54 / DSM 12343)</name>
    <dbReference type="NCBI Taxonomy" id="177439"/>
    <lineage>
        <taxon>Bacteria</taxon>
        <taxon>Pseudomonadati</taxon>
        <taxon>Thermodesulfobacteriota</taxon>
        <taxon>Desulfobulbia</taxon>
        <taxon>Desulfobulbales</taxon>
        <taxon>Desulfocapsaceae</taxon>
        <taxon>Desulfotalea</taxon>
    </lineage>
</organism>
<proteinExistence type="inferred from homology"/>
<evidence type="ECO:0000255" key="1">
    <source>
        <dbReference type="HAMAP-Rule" id="MF_01037"/>
    </source>
</evidence>
<keyword id="KW-0963">Cytoplasm</keyword>
<keyword id="KW-0274">FAD</keyword>
<keyword id="KW-0285">Flavoprotein</keyword>
<keyword id="KW-0489">Methyltransferase</keyword>
<keyword id="KW-0520">NAD</keyword>
<keyword id="KW-0521">NADP</keyword>
<keyword id="KW-1185">Reference proteome</keyword>
<keyword id="KW-0808">Transferase</keyword>
<keyword id="KW-0819">tRNA processing</keyword>
<dbReference type="EC" id="2.1.1.74" evidence="1"/>
<dbReference type="EMBL" id="CR522870">
    <property type="protein sequence ID" value="CAG36698.1"/>
    <property type="molecule type" value="Genomic_DNA"/>
</dbReference>
<dbReference type="RefSeq" id="WP_011189210.1">
    <property type="nucleotide sequence ID" value="NC_006138.1"/>
</dbReference>
<dbReference type="SMR" id="Q6ALS7"/>
<dbReference type="STRING" id="177439.DP1969"/>
<dbReference type="KEGG" id="dps:DP1969"/>
<dbReference type="eggNOG" id="COG1206">
    <property type="taxonomic scope" value="Bacteria"/>
</dbReference>
<dbReference type="HOGENOM" id="CLU_033057_1_0_7"/>
<dbReference type="OrthoDB" id="9803114at2"/>
<dbReference type="Proteomes" id="UP000000602">
    <property type="component" value="Chromosome"/>
</dbReference>
<dbReference type="GO" id="GO:0005829">
    <property type="term" value="C:cytosol"/>
    <property type="evidence" value="ECO:0007669"/>
    <property type="project" value="TreeGrafter"/>
</dbReference>
<dbReference type="GO" id="GO:0050660">
    <property type="term" value="F:flavin adenine dinucleotide binding"/>
    <property type="evidence" value="ECO:0007669"/>
    <property type="project" value="UniProtKB-UniRule"/>
</dbReference>
<dbReference type="GO" id="GO:0047151">
    <property type="term" value="F:tRNA (uracil(54)-C5)-methyltransferase activity, 5,10-methylenetetrahydrofolate-dependent"/>
    <property type="evidence" value="ECO:0007669"/>
    <property type="project" value="UniProtKB-UniRule"/>
</dbReference>
<dbReference type="GO" id="GO:0030488">
    <property type="term" value="P:tRNA methylation"/>
    <property type="evidence" value="ECO:0007669"/>
    <property type="project" value="TreeGrafter"/>
</dbReference>
<dbReference type="GO" id="GO:0002098">
    <property type="term" value="P:tRNA wobble uridine modification"/>
    <property type="evidence" value="ECO:0007669"/>
    <property type="project" value="TreeGrafter"/>
</dbReference>
<dbReference type="Gene3D" id="3.50.50.60">
    <property type="entry name" value="FAD/NAD(P)-binding domain"/>
    <property type="match status" value="2"/>
</dbReference>
<dbReference type="HAMAP" id="MF_01037">
    <property type="entry name" value="TrmFO"/>
    <property type="match status" value="1"/>
</dbReference>
<dbReference type="InterPro" id="IPR036188">
    <property type="entry name" value="FAD/NAD-bd_sf"/>
</dbReference>
<dbReference type="InterPro" id="IPR002218">
    <property type="entry name" value="MnmG-rel"/>
</dbReference>
<dbReference type="InterPro" id="IPR040131">
    <property type="entry name" value="MnmG_N"/>
</dbReference>
<dbReference type="InterPro" id="IPR004417">
    <property type="entry name" value="TrmFO"/>
</dbReference>
<dbReference type="NCBIfam" id="TIGR00137">
    <property type="entry name" value="gid_trmFO"/>
    <property type="match status" value="1"/>
</dbReference>
<dbReference type="NCBIfam" id="NF003739">
    <property type="entry name" value="PRK05335.1"/>
    <property type="match status" value="1"/>
</dbReference>
<dbReference type="PANTHER" id="PTHR11806">
    <property type="entry name" value="GLUCOSE INHIBITED DIVISION PROTEIN A"/>
    <property type="match status" value="1"/>
</dbReference>
<dbReference type="PANTHER" id="PTHR11806:SF2">
    <property type="entry name" value="METHYLENETETRAHYDROFOLATE--TRNA-(URACIL-5-)-METHYLTRANSFERASE TRMFO"/>
    <property type="match status" value="1"/>
</dbReference>
<dbReference type="Pfam" id="PF01134">
    <property type="entry name" value="GIDA"/>
    <property type="match status" value="1"/>
</dbReference>
<dbReference type="PRINTS" id="PR00411">
    <property type="entry name" value="PNDRDTASEI"/>
</dbReference>
<dbReference type="SUPFAM" id="SSF51905">
    <property type="entry name" value="FAD/NAD(P)-binding domain"/>
    <property type="match status" value="1"/>
</dbReference>
<name>TRMFO_DESPS</name>
<protein>
    <recommendedName>
        <fullName evidence="1">Methylenetetrahydrofolate--tRNA-(uracil-5-)-methyltransferase TrmFO</fullName>
        <ecNumber evidence="1">2.1.1.74</ecNumber>
    </recommendedName>
    <alternativeName>
        <fullName evidence="1">Folate-dependent tRNA (uracil-5-)-methyltransferase</fullName>
    </alternativeName>
    <alternativeName>
        <fullName evidence="1">Folate-dependent tRNA(M-5-U54)-methyltransferase</fullName>
    </alternativeName>
</protein>